<keyword id="KW-0068">Autocatalytic cleavage</keyword>
<keyword id="KW-0963">Cytoplasm</keyword>
<keyword id="KW-0378">Hydrolase</keyword>
<keyword id="KW-0645">Protease</keyword>
<keyword id="KW-0647">Proteasome</keyword>
<keyword id="KW-1185">Reference proteome</keyword>
<keyword id="KW-0888">Threonine protease</keyword>
<keyword id="KW-0865">Zymogen</keyword>
<feature type="propeptide" id="PRO_0000397592" description="Removed in mature form; by autocatalysis" evidence="1">
    <location>
        <begin position="1"/>
        <end position="54"/>
    </location>
</feature>
<feature type="chain" id="PRO_0000397593" description="Proteasome subunit beta">
    <location>
        <begin position="55"/>
        <end position="282"/>
    </location>
</feature>
<feature type="active site" description="Nucleophile" evidence="1">
    <location>
        <position position="55"/>
    </location>
</feature>
<organism>
    <name type="scientific">Streptosporangium roseum (strain ATCC 12428 / DSM 43021 / JCM 3005 / KCTC 9067 / NCIMB 10171 / NRRL 2505 / NI 9100)</name>
    <dbReference type="NCBI Taxonomy" id="479432"/>
    <lineage>
        <taxon>Bacteria</taxon>
        <taxon>Bacillati</taxon>
        <taxon>Actinomycetota</taxon>
        <taxon>Actinomycetes</taxon>
        <taxon>Streptosporangiales</taxon>
        <taxon>Streptosporangiaceae</taxon>
        <taxon>Streptosporangium</taxon>
    </lineage>
</organism>
<dbReference type="EC" id="3.4.25.1" evidence="1"/>
<dbReference type="EMBL" id="CP001814">
    <property type="protein sequence ID" value="ACZ88606.1"/>
    <property type="molecule type" value="Genomic_DNA"/>
</dbReference>
<dbReference type="SMR" id="D2ATV1"/>
<dbReference type="STRING" id="479432.Sros_5871"/>
<dbReference type="MEROPS" id="T01.005"/>
<dbReference type="KEGG" id="sro:Sros_5871"/>
<dbReference type="eggNOG" id="COG0638">
    <property type="taxonomic scope" value="Bacteria"/>
</dbReference>
<dbReference type="HOGENOM" id="CLU_035750_2_0_11"/>
<dbReference type="OrthoDB" id="5174038at2"/>
<dbReference type="UniPathway" id="UPA00997"/>
<dbReference type="Proteomes" id="UP000002029">
    <property type="component" value="Chromosome"/>
</dbReference>
<dbReference type="GO" id="GO:0005737">
    <property type="term" value="C:cytoplasm"/>
    <property type="evidence" value="ECO:0007669"/>
    <property type="project" value="UniProtKB-SubCell"/>
</dbReference>
<dbReference type="GO" id="GO:0019774">
    <property type="term" value="C:proteasome core complex, beta-subunit complex"/>
    <property type="evidence" value="ECO:0007669"/>
    <property type="project" value="UniProtKB-UniRule"/>
</dbReference>
<dbReference type="GO" id="GO:0004298">
    <property type="term" value="F:threonine-type endopeptidase activity"/>
    <property type="evidence" value="ECO:0007669"/>
    <property type="project" value="UniProtKB-UniRule"/>
</dbReference>
<dbReference type="GO" id="GO:0019941">
    <property type="term" value="P:modification-dependent protein catabolic process"/>
    <property type="evidence" value="ECO:0007669"/>
    <property type="project" value="UniProtKB-UniRule"/>
</dbReference>
<dbReference type="GO" id="GO:0010498">
    <property type="term" value="P:proteasomal protein catabolic process"/>
    <property type="evidence" value="ECO:0007669"/>
    <property type="project" value="UniProtKB-UniRule"/>
</dbReference>
<dbReference type="CDD" id="cd01906">
    <property type="entry name" value="proteasome_protease_HslV"/>
    <property type="match status" value="1"/>
</dbReference>
<dbReference type="Gene3D" id="3.60.20.10">
    <property type="entry name" value="Glutamine Phosphoribosylpyrophosphate, subunit 1, domain 1"/>
    <property type="match status" value="1"/>
</dbReference>
<dbReference type="HAMAP" id="MF_02113_B">
    <property type="entry name" value="Proteasome_B_B"/>
    <property type="match status" value="1"/>
</dbReference>
<dbReference type="InterPro" id="IPR029055">
    <property type="entry name" value="Ntn_hydrolases_N"/>
</dbReference>
<dbReference type="InterPro" id="IPR000243">
    <property type="entry name" value="Pept_T1A_subB"/>
</dbReference>
<dbReference type="InterPro" id="IPR001353">
    <property type="entry name" value="Proteasome_sua/b"/>
</dbReference>
<dbReference type="InterPro" id="IPR023333">
    <property type="entry name" value="Proteasome_suB-type"/>
</dbReference>
<dbReference type="InterPro" id="IPR022483">
    <property type="entry name" value="PSB_actinobac"/>
</dbReference>
<dbReference type="NCBIfam" id="TIGR03690">
    <property type="entry name" value="20S_bact_beta"/>
    <property type="match status" value="1"/>
</dbReference>
<dbReference type="PANTHER" id="PTHR32194:SF0">
    <property type="entry name" value="ATP-DEPENDENT PROTEASE SUBUNIT HSLV"/>
    <property type="match status" value="1"/>
</dbReference>
<dbReference type="PANTHER" id="PTHR32194">
    <property type="entry name" value="METALLOPROTEASE TLDD"/>
    <property type="match status" value="1"/>
</dbReference>
<dbReference type="Pfam" id="PF00227">
    <property type="entry name" value="Proteasome"/>
    <property type="match status" value="1"/>
</dbReference>
<dbReference type="PRINTS" id="PR00141">
    <property type="entry name" value="PROTEASOME"/>
</dbReference>
<dbReference type="SUPFAM" id="SSF56235">
    <property type="entry name" value="N-terminal nucleophile aminohydrolases (Ntn hydrolases)"/>
    <property type="match status" value="1"/>
</dbReference>
<dbReference type="PROSITE" id="PS51476">
    <property type="entry name" value="PROTEASOME_BETA_2"/>
    <property type="match status" value="1"/>
</dbReference>
<name>PSB_STRRD</name>
<accession>D2ATV1</accession>
<comment type="function">
    <text evidence="1">Component of the proteasome core, a large protease complex with broad specificity involved in protein degradation.</text>
</comment>
<comment type="catalytic activity">
    <reaction evidence="1">
        <text>Cleavage of peptide bonds with very broad specificity.</text>
        <dbReference type="EC" id="3.4.25.1"/>
    </reaction>
</comment>
<comment type="activity regulation">
    <text evidence="1">The formation of the proteasomal ATPase ARC-20S proteasome complex, likely via the docking of the C-termini of ARC into the intersubunit pockets in the alpha-rings, may trigger opening of the gate for substrate entry. Interconversion between the open-gate and close-gate conformations leads to a dynamic regulation of the 20S proteasome proteolysis activity.</text>
</comment>
<comment type="pathway">
    <text evidence="1">Protein degradation; proteasomal Pup-dependent pathway.</text>
</comment>
<comment type="subunit">
    <text evidence="1">The 20S proteasome core is composed of 14 alpha and 14 beta subunits that assemble into four stacked heptameric rings, resulting in a barrel-shaped structure. The two inner rings, each composed of seven catalytic beta subunits, are sandwiched by two outer rings, each composed of seven alpha subunits. The catalytic chamber with the active sites is on the inside of the barrel. Has a gated structure, the ends of the cylinder being occluded by the N-termini of the alpha-subunits. Is capped by the proteasome-associated ATPase, ARC.</text>
</comment>
<comment type="subcellular location">
    <subcellularLocation>
        <location evidence="1">Cytoplasm</location>
    </subcellularLocation>
</comment>
<comment type="similarity">
    <text evidence="1">Belongs to the peptidase T1B family.</text>
</comment>
<evidence type="ECO:0000255" key="1">
    <source>
        <dbReference type="HAMAP-Rule" id="MF_02113"/>
    </source>
</evidence>
<sequence length="282" mass="30205">MGSHRDLPAGMVNHIFTNSGISSFTEFVGSYAPDLLPGRNETLAAPVGDRIPHATTIVAATCAGGVVMAGDRRATSGNIISQRDMEKVFRTDDYSCMGIAGTASTGIEMARLYRVELEHYEKMEGRTLSVAGKANRLATMIRGNLGMAMQGLVVVPLFAAYDPEIDGGRIFGYDVGGGPYEQQQYHSIGSGSIFARGSLKKLYRENASPEEVVLTLIHALYDAADDDSATGGPDVTRKIWPVVAQITADGFHRLSDEEVGGHVQTVLQERMSSPDGPVAPLR</sequence>
<reference key="1">
    <citation type="journal article" date="2010" name="Stand. Genomic Sci.">
        <title>Complete genome sequence of Streptosporangium roseum type strain (NI 9100).</title>
        <authorList>
            <person name="Nolan M."/>
            <person name="Sikorski J."/>
            <person name="Jando M."/>
            <person name="Lucas S."/>
            <person name="Lapidus A."/>
            <person name="Glavina Del Rio T."/>
            <person name="Chen F."/>
            <person name="Tice H."/>
            <person name="Pitluck S."/>
            <person name="Cheng J.F."/>
            <person name="Chertkov O."/>
            <person name="Sims D."/>
            <person name="Meincke L."/>
            <person name="Brettin T."/>
            <person name="Han C."/>
            <person name="Detter J.C."/>
            <person name="Bruce D."/>
            <person name="Goodwin L."/>
            <person name="Land M."/>
            <person name="Hauser L."/>
            <person name="Chang Y.J."/>
            <person name="Jeffries C.D."/>
            <person name="Ivanova N."/>
            <person name="Mavromatis K."/>
            <person name="Mikhailova N."/>
            <person name="Chen A."/>
            <person name="Palaniappan K."/>
            <person name="Chain P."/>
            <person name="Rohde M."/>
            <person name="Goker M."/>
            <person name="Bristow J."/>
            <person name="Eisen J.A."/>
            <person name="Markowitz V."/>
            <person name="Hugenholtz P."/>
            <person name="Kyrpides N.C."/>
            <person name="Klenk H.P."/>
        </authorList>
    </citation>
    <scope>NUCLEOTIDE SEQUENCE [LARGE SCALE GENOMIC DNA]</scope>
    <source>
        <strain>ATCC 12428 / DSM 43021 / JCM 3005 / KCTC 9067 / NCIMB 10171 / NRRL 2505 / NI 9100</strain>
    </source>
</reference>
<protein>
    <recommendedName>
        <fullName evidence="1">Proteasome subunit beta</fullName>
        <ecNumber evidence="1">3.4.25.1</ecNumber>
    </recommendedName>
    <alternativeName>
        <fullName evidence="1">20S proteasome beta subunit</fullName>
    </alternativeName>
    <alternativeName>
        <fullName evidence="1">Proteasome core protein PrcB</fullName>
    </alternativeName>
</protein>
<proteinExistence type="inferred from homology"/>
<gene>
    <name evidence="1" type="primary">prcB</name>
    <name type="ordered locus">Sros_5871</name>
</gene>